<protein>
    <recommendedName>
        <fullName>Capsid protein</fullName>
    </recommendedName>
    <alternativeName>
        <fullName>p30</fullName>
    </alternativeName>
</protein>
<feature type="chain" id="PRO_0000222869" description="Capsid protein">
    <location>
        <begin position="1"/>
        <end position="276"/>
    </location>
</feature>
<feature type="region of interest" description="R domain, interaction with RNA">
    <location>
        <begin position="1"/>
        <end position="85"/>
    </location>
</feature>
<feature type="region of interest" description="S domain, virion shell">
    <location>
        <begin position="86"/>
        <end position="266"/>
    </location>
</feature>
<feature type="region of interest" description="P domain, projecting">
    <location>
        <begin position="267"/>
        <end position="276"/>
    </location>
</feature>
<feature type="sequence variant">
    <original>R</original>
    <variation>Q</variation>
    <location>
        <position position="54"/>
    </location>
</feature>
<feature type="sequence variant">
    <original>G</original>
    <variation>A</variation>
    <location>
        <position position="71"/>
    </location>
</feature>
<feature type="sequence variant">
    <original>I</original>
    <variation>T</variation>
    <location>
        <position position="115"/>
    </location>
</feature>
<feature type="sequence variant">
    <original>S</original>
    <variation>G</variation>
    <location>
        <position position="124"/>
    </location>
</feature>
<feature type="sequence variant">
    <original>L</original>
    <variation>S</variation>
    <location>
        <position position="193"/>
    </location>
</feature>
<feature type="sequence variant">
    <original>S</original>
    <variation>G</variation>
    <location>
        <position position="229"/>
    </location>
</feature>
<organism>
    <name type="scientific">Tobacco necrosis virus (strain A)</name>
    <name type="common">TNV-A</name>
    <dbReference type="NCBI Taxonomy" id="12055"/>
    <lineage>
        <taxon>Viruses</taxon>
        <taxon>Riboviria</taxon>
        <taxon>Orthornavirae</taxon>
        <taxon>Kitrinoviricota</taxon>
        <taxon>Tolucaviricetes</taxon>
        <taxon>Tolivirales</taxon>
        <taxon>Tombusviridae</taxon>
        <taxon>Procedovirinae</taxon>
        <taxon>Alphanecrovirus</taxon>
        <taxon>Alphanecrovirus nicotianae</taxon>
    </lineage>
</organism>
<reference key="1">
    <citation type="journal article" date="1990" name="Virology">
        <title>Genome structure of tobacco necrosis virus strain A.</title>
        <authorList>
            <person name="Meulewaeter F."/>
            <person name="Seurinck J."/>
            <person name="van Emmelo J."/>
        </authorList>
    </citation>
    <scope>NUCLEOTIDE SEQUENCE [GENOMIC RNA]</scope>
</reference>
<sequence>MAGKKNNNNGQYIILRTPEQQVEIDQRNARRAQMGRMKKARQPVQRYLQQHGLRNGLSGRGGYIVAPTSGGVVTRPIVPKFSNRGDSTIVRNTEILNNQILAALGAFNTTNSALIAAAPSWLASIADLYSKYRWLSCEIIYIPKCPTTTSGSIAMAFTYDRNDAAPTARAQLSQSYKAINFPPYAGYDGAAYLNSNQGAGSAIAVQLDVTKLDKPWYPTISSAGFGALSVLDQNQFCPASLVVASDGGPATATPAGDLFIKYVIEFIEPINPTMNV</sequence>
<comment type="function">
    <text>Capsid protein self-assembles to form an icosahedral capsid with a T=3 symmetry, about 28 nm in diameter, and consisting of 180 capsid proteins.</text>
</comment>
<comment type="subunit">
    <text evidence="1">Homomultimer.</text>
</comment>
<comment type="subcellular location">
    <subcellularLocation>
        <location evidence="1">Virion</location>
    </subcellularLocation>
</comment>
<comment type="similarity">
    <text evidence="1">Belongs to the icosahedral plant coat protein family.</text>
</comment>
<proteinExistence type="inferred from homology"/>
<evidence type="ECO:0000305" key="1"/>
<name>CAPSD_TNVA</name>
<accession>P22959</accession>
<organismHost>
    <name type="scientific">Chenopodium amaranticolor</name>
    <dbReference type="NCBI Taxonomy" id="66262"/>
</organismHost>
<organismHost>
    <name type="scientific">Chenopodium quinoa</name>
    <name type="common">Quinoa</name>
    <dbReference type="NCBI Taxonomy" id="63459"/>
</organismHost>
<organismHost>
    <name type="scientific">Cucumis sativus</name>
    <name type="common">Cucumber</name>
    <dbReference type="NCBI Taxonomy" id="3659"/>
</organismHost>
<organismHost>
    <name type="scientific">Nicotiana clevelandii</name>
    <name type="common">Wild tobacco</name>
    <dbReference type="NCBI Taxonomy" id="81866"/>
</organismHost>
<organismHost>
    <name type="scientific">Nicotiana tabacum</name>
    <name type="common">Common tobacco</name>
    <dbReference type="NCBI Taxonomy" id="4097"/>
</organismHost>
<organismHost>
    <name type="scientific">Phaseolus vulgaris</name>
    <name type="common">Kidney bean</name>
    <name type="synonym">French bean</name>
    <dbReference type="NCBI Taxonomy" id="3885"/>
</organismHost>
<organismHost>
    <name type="scientific">Tulipa gesneriana</name>
    <name type="common">Garden tulip</name>
    <dbReference type="NCBI Taxonomy" id="13306"/>
</organismHost>
<dbReference type="EMBL" id="M33002">
    <property type="protein sequence ID" value="AAA86437.1"/>
    <property type="molecule type" value="Genomic_RNA"/>
</dbReference>
<dbReference type="PIR" id="D35523">
    <property type="entry name" value="VCWQTN"/>
</dbReference>
<dbReference type="RefSeq" id="NP_056828.1">
    <property type="nucleotide sequence ID" value="NC_001777.1"/>
</dbReference>
<dbReference type="SMR" id="P22959"/>
<dbReference type="KEGG" id="vg:1493900"/>
<dbReference type="OrthoDB" id="9667at10239"/>
<dbReference type="Proteomes" id="UP000000575">
    <property type="component" value="Genome"/>
</dbReference>
<dbReference type="GO" id="GO:0039617">
    <property type="term" value="C:T=3 icosahedral viral capsid"/>
    <property type="evidence" value="ECO:0007669"/>
    <property type="project" value="UniProtKB-KW"/>
</dbReference>
<dbReference type="GO" id="GO:0003723">
    <property type="term" value="F:RNA binding"/>
    <property type="evidence" value="ECO:0007669"/>
    <property type="project" value="UniProtKB-KW"/>
</dbReference>
<dbReference type="GO" id="GO:0005198">
    <property type="term" value="F:structural molecule activity"/>
    <property type="evidence" value="ECO:0007669"/>
    <property type="project" value="InterPro"/>
</dbReference>
<dbReference type="Gene3D" id="2.60.120.20">
    <property type="match status" value="1"/>
</dbReference>
<dbReference type="InterPro" id="IPR000937">
    <property type="entry name" value="Capsid_prot_S-dom_vir"/>
</dbReference>
<dbReference type="InterPro" id="IPR029053">
    <property type="entry name" value="Viral_coat"/>
</dbReference>
<dbReference type="Pfam" id="PF00729">
    <property type="entry name" value="Viral_coat"/>
    <property type="match status" value="1"/>
</dbReference>
<dbReference type="PRINTS" id="PR00233">
    <property type="entry name" value="ICOSAHEDRAL"/>
</dbReference>
<dbReference type="SUPFAM" id="SSF88633">
    <property type="entry name" value="Positive stranded ssRNA viruses"/>
    <property type="match status" value="1"/>
</dbReference>
<dbReference type="PROSITE" id="PS00555">
    <property type="entry name" value="ICOSAH_VIR_COAT_S"/>
    <property type="match status" value="1"/>
</dbReference>
<keyword id="KW-0167">Capsid protein</keyword>
<keyword id="KW-1185">Reference proteome</keyword>
<keyword id="KW-0694">RNA-binding</keyword>
<keyword id="KW-1142">T=3 icosahedral capsid protein</keyword>
<keyword id="KW-0946">Virion</keyword>
<gene>
    <name type="ORF">ORF4</name>
</gene>